<organism>
    <name type="scientific">Chlamydia trachomatis serovar D (strain ATCC VR-885 / DSM 19411 / UW-3/Cx)</name>
    <dbReference type="NCBI Taxonomy" id="272561"/>
    <lineage>
        <taxon>Bacteria</taxon>
        <taxon>Pseudomonadati</taxon>
        <taxon>Chlamydiota</taxon>
        <taxon>Chlamydiia</taxon>
        <taxon>Chlamydiales</taxon>
        <taxon>Chlamydiaceae</taxon>
        <taxon>Chlamydia/Chlamydophila group</taxon>
        <taxon>Chlamydia</taxon>
    </lineage>
</organism>
<reference key="1">
    <citation type="journal article" date="1998" name="Science">
        <title>Genome sequence of an obligate intracellular pathogen of humans: Chlamydia trachomatis.</title>
        <authorList>
            <person name="Stephens R.S."/>
            <person name="Kalman S."/>
            <person name="Lammel C.J."/>
            <person name="Fan J."/>
            <person name="Marathe R."/>
            <person name="Aravind L."/>
            <person name="Mitchell W.P."/>
            <person name="Olinger L."/>
            <person name="Tatusov R.L."/>
            <person name="Zhao Q."/>
            <person name="Koonin E.V."/>
            <person name="Davis R.W."/>
        </authorList>
    </citation>
    <scope>NUCLEOTIDE SEQUENCE [LARGE SCALE GENOMIC DNA]</scope>
    <source>
        <strain>ATCC VR-885 / DSM 19411 / UW-3/Cx</strain>
    </source>
</reference>
<dbReference type="EC" id="3.5.1.88" evidence="1"/>
<dbReference type="EMBL" id="AE001273">
    <property type="protein sequence ID" value="AAC67948.1"/>
    <property type="molecule type" value="Genomic_DNA"/>
</dbReference>
<dbReference type="PIR" id="B71526">
    <property type="entry name" value="B71526"/>
</dbReference>
<dbReference type="RefSeq" id="NP_219861.1">
    <property type="nucleotide sequence ID" value="NC_000117.1"/>
</dbReference>
<dbReference type="RefSeq" id="WP_009871704.1">
    <property type="nucleotide sequence ID" value="NC_000117.1"/>
</dbReference>
<dbReference type="SMR" id="O84357"/>
<dbReference type="FunCoup" id="O84357">
    <property type="interactions" value="246"/>
</dbReference>
<dbReference type="STRING" id="272561.CT_353"/>
<dbReference type="EnsemblBacteria" id="AAC67948">
    <property type="protein sequence ID" value="AAC67948"/>
    <property type="gene ID" value="CT_353"/>
</dbReference>
<dbReference type="GeneID" id="884763"/>
<dbReference type="KEGG" id="ctr:CT_353"/>
<dbReference type="PATRIC" id="fig|272561.5.peg.381"/>
<dbReference type="HOGENOM" id="CLU_061901_2_0_0"/>
<dbReference type="InParanoid" id="O84357"/>
<dbReference type="OrthoDB" id="9784988at2"/>
<dbReference type="Proteomes" id="UP000000431">
    <property type="component" value="Chromosome"/>
</dbReference>
<dbReference type="GO" id="GO:0046872">
    <property type="term" value="F:metal ion binding"/>
    <property type="evidence" value="ECO:0007669"/>
    <property type="project" value="UniProtKB-KW"/>
</dbReference>
<dbReference type="GO" id="GO:0042586">
    <property type="term" value="F:peptide deformylase activity"/>
    <property type="evidence" value="ECO:0000318"/>
    <property type="project" value="GO_Central"/>
</dbReference>
<dbReference type="GO" id="GO:0043686">
    <property type="term" value="P:co-translational protein modification"/>
    <property type="evidence" value="ECO:0000318"/>
    <property type="project" value="GO_Central"/>
</dbReference>
<dbReference type="GO" id="GO:0006412">
    <property type="term" value="P:translation"/>
    <property type="evidence" value="ECO:0007669"/>
    <property type="project" value="UniProtKB-UniRule"/>
</dbReference>
<dbReference type="CDD" id="cd00487">
    <property type="entry name" value="Pep_deformylase"/>
    <property type="match status" value="1"/>
</dbReference>
<dbReference type="FunFam" id="3.90.45.10:FF:000016">
    <property type="entry name" value="Peptide deformylase"/>
    <property type="match status" value="1"/>
</dbReference>
<dbReference type="Gene3D" id="3.90.45.10">
    <property type="entry name" value="Peptide deformylase"/>
    <property type="match status" value="1"/>
</dbReference>
<dbReference type="HAMAP" id="MF_00163">
    <property type="entry name" value="Pep_deformylase"/>
    <property type="match status" value="1"/>
</dbReference>
<dbReference type="InterPro" id="IPR023635">
    <property type="entry name" value="Peptide_deformylase"/>
</dbReference>
<dbReference type="InterPro" id="IPR036821">
    <property type="entry name" value="Peptide_deformylase_sf"/>
</dbReference>
<dbReference type="NCBIfam" id="TIGR00079">
    <property type="entry name" value="pept_deformyl"/>
    <property type="match status" value="1"/>
</dbReference>
<dbReference type="NCBIfam" id="NF001159">
    <property type="entry name" value="PRK00150.1-3"/>
    <property type="match status" value="1"/>
</dbReference>
<dbReference type="PANTHER" id="PTHR10458">
    <property type="entry name" value="PEPTIDE DEFORMYLASE"/>
    <property type="match status" value="1"/>
</dbReference>
<dbReference type="PANTHER" id="PTHR10458:SF22">
    <property type="entry name" value="PEPTIDE DEFORMYLASE"/>
    <property type="match status" value="1"/>
</dbReference>
<dbReference type="Pfam" id="PF01327">
    <property type="entry name" value="Pep_deformylase"/>
    <property type="match status" value="1"/>
</dbReference>
<dbReference type="PIRSF" id="PIRSF004749">
    <property type="entry name" value="Pep_def"/>
    <property type="match status" value="1"/>
</dbReference>
<dbReference type="PRINTS" id="PR01576">
    <property type="entry name" value="PDEFORMYLASE"/>
</dbReference>
<dbReference type="SUPFAM" id="SSF56420">
    <property type="entry name" value="Peptide deformylase"/>
    <property type="match status" value="1"/>
</dbReference>
<gene>
    <name evidence="1" type="primary">def</name>
    <name type="ordered locus">CT_353</name>
</gene>
<evidence type="ECO:0000255" key="1">
    <source>
        <dbReference type="HAMAP-Rule" id="MF_00163"/>
    </source>
</evidence>
<accession>O84357</accession>
<proteinExistence type="inferred from homology"/>
<comment type="function">
    <text evidence="1">Removes the formyl group from the N-terminal Met of newly synthesized proteins. Requires at least a dipeptide for an efficient rate of reaction. N-terminal L-methionine is a prerequisite for activity but the enzyme has broad specificity at other positions.</text>
</comment>
<comment type="catalytic activity">
    <reaction evidence="1">
        <text>N-terminal N-formyl-L-methionyl-[peptide] + H2O = N-terminal L-methionyl-[peptide] + formate</text>
        <dbReference type="Rhea" id="RHEA:24420"/>
        <dbReference type="Rhea" id="RHEA-COMP:10639"/>
        <dbReference type="Rhea" id="RHEA-COMP:10640"/>
        <dbReference type="ChEBI" id="CHEBI:15377"/>
        <dbReference type="ChEBI" id="CHEBI:15740"/>
        <dbReference type="ChEBI" id="CHEBI:49298"/>
        <dbReference type="ChEBI" id="CHEBI:64731"/>
        <dbReference type="EC" id="3.5.1.88"/>
    </reaction>
</comment>
<comment type="cofactor">
    <cofactor evidence="1">
        <name>Fe(2+)</name>
        <dbReference type="ChEBI" id="CHEBI:29033"/>
    </cofactor>
    <text evidence="1">Binds 1 Fe(2+) ion.</text>
</comment>
<comment type="similarity">
    <text evidence="1">Belongs to the polypeptide deformylase family.</text>
</comment>
<name>DEF_CHLTR</name>
<keyword id="KW-0378">Hydrolase</keyword>
<keyword id="KW-0408">Iron</keyword>
<keyword id="KW-0479">Metal-binding</keyword>
<keyword id="KW-0648">Protein biosynthesis</keyword>
<keyword id="KW-1185">Reference proteome</keyword>
<sequence length="181" mass="20523">MIRDLEYYDSPILRKVAAPVTEITDELRQLVLDMSETMAFYKGVGLAAPQVGQSISLFIMGVERELEDGELVFCDFPRVFINPVITQKSEQLVYGNEGCLSIPGLRGEVARPDKITVSAKNLDGQQFSLALEGFLARIVMHETDHLHGVLYIDRMSDKDKTKQFKNNLEKIRRKYSILRGL</sequence>
<protein>
    <recommendedName>
        <fullName evidence="1">Peptide deformylase</fullName>
        <shortName evidence="1">PDF</shortName>
        <ecNumber evidence="1">3.5.1.88</ecNumber>
    </recommendedName>
    <alternativeName>
        <fullName evidence="1">Polypeptide deformylase</fullName>
    </alternativeName>
</protein>
<feature type="chain" id="PRO_0000082764" description="Peptide deformylase">
    <location>
        <begin position="1"/>
        <end position="181"/>
    </location>
</feature>
<feature type="active site" evidence="1">
    <location>
        <position position="142"/>
    </location>
</feature>
<feature type="binding site" evidence="1">
    <location>
        <position position="99"/>
    </location>
    <ligand>
        <name>Fe cation</name>
        <dbReference type="ChEBI" id="CHEBI:24875"/>
    </ligand>
</feature>
<feature type="binding site" evidence="1">
    <location>
        <position position="141"/>
    </location>
    <ligand>
        <name>Fe cation</name>
        <dbReference type="ChEBI" id="CHEBI:24875"/>
    </ligand>
</feature>
<feature type="binding site" evidence="1">
    <location>
        <position position="145"/>
    </location>
    <ligand>
        <name>Fe cation</name>
        <dbReference type="ChEBI" id="CHEBI:24875"/>
    </ligand>
</feature>